<name>MEXB_PSEAE</name>
<reference key="1">
    <citation type="journal article" date="1993" name="Mol. Microbiol.">
        <title>Cloning and sequence analysis of an EnvCD homologue in Pseudomonas aeruginosa: regulation by iron and possible involvement in the secretion of the siderophore pyoverdine.</title>
        <authorList>
            <person name="Poole K."/>
            <person name="Heinrichs D.E."/>
            <person name="Neshat S."/>
        </authorList>
    </citation>
    <scope>NUCLEOTIDE SEQUENCE [GENOMIC DNA]</scope>
    <source>
        <strain>PAO6609</strain>
    </source>
</reference>
<reference key="2">
    <citation type="journal article" date="2000" name="Nature">
        <title>Complete genome sequence of Pseudomonas aeruginosa PAO1, an opportunistic pathogen.</title>
        <authorList>
            <person name="Stover C.K."/>
            <person name="Pham X.-Q.T."/>
            <person name="Erwin A.L."/>
            <person name="Mizoguchi S.D."/>
            <person name="Warrener P."/>
            <person name="Hickey M.J."/>
            <person name="Brinkman F.S.L."/>
            <person name="Hufnagle W.O."/>
            <person name="Kowalik D.J."/>
            <person name="Lagrou M."/>
            <person name="Garber R.L."/>
            <person name="Goltry L."/>
            <person name="Tolentino E."/>
            <person name="Westbrock-Wadman S."/>
            <person name="Yuan Y."/>
            <person name="Brody L.L."/>
            <person name="Coulter S.N."/>
            <person name="Folger K.R."/>
            <person name="Kas A."/>
            <person name="Larbig K."/>
            <person name="Lim R.M."/>
            <person name="Smith K.A."/>
            <person name="Spencer D.H."/>
            <person name="Wong G.K.-S."/>
            <person name="Wu Z."/>
            <person name="Paulsen I.T."/>
            <person name="Reizer J."/>
            <person name="Saier M.H. Jr."/>
            <person name="Hancock R.E.W."/>
            <person name="Lory S."/>
            <person name="Olson M.V."/>
        </authorList>
    </citation>
    <scope>NUCLEOTIDE SEQUENCE [LARGE SCALE GENOMIC DNA]</scope>
    <source>
        <strain>ATCC 15692 / DSM 22644 / CIP 104116 / JCM 14847 / LMG 12228 / 1C / PRS 101 / PAO1</strain>
    </source>
</reference>
<reference key="3">
    <citation type="journal article" date="1999" name="Cell">
        <title>Molecular mechanisms of bacterial virulence elucidated using a Pseudomonas aeruginosa-Caenorhabditis elegans pathogenesis model.</title>
        <authorList>
            <person name="Mahajan-Miklos S."/>
            <person name="Tan M.-W."/>
            <person name="Rahme L.G."/>
            <person name="Ausubel F.M."/>
        </authorList>
    </citation>
    <scope>NUCLEOTIDE SEQUENCE [GENOMIC DNA] OF 1-128</scope>
    <source>
        <strain>PA14</strain>
    </source>
</reference>
<reference key="4">
    <citation type="journal article" date="2004" name="J. Proteome Res.">
        <title>Global analysis of the membrane subproteome of Pseudomonas aeruginosa using liquid chromatography-tandem mass spectrometry.</title>
        <authorList>
            <person name="Blonder J."/>
            <person name="Goshe M.B."/>
            <person name="Xiao W."/>
            <person name="Camp D.G. II"/>
            <person name="Wingerd M."/>
            <person name="Davis R.W."/>
            <person name="Smith R.D."/>
        </authorList>
    </citation>
    <scope>PROTEIN SEQUENCE OF 171-185; 240-252; 308-322 AND 818-848</scope>
    <scope>IDENTIFICATION BY MASS SPECTROMETRY</scope>
    <source>
        <strain>ATCC 15692 / DSM 22644 / CIP 104116 / JCM 14847 / LMG 12228 / 1C / PRS 101 / PAO1</strain>
    </source>
</reference>
<reference key="5">
    <citation type="journal article" date="1993" name="J. Bacteriol.">
        <title>Multiple antibiotic resistance in Pseudomonas aeruginosa: evidence for involvement of an efflux operon.</title>
        <authorList>
            <person name="Poole K."/>
            <person name="Krebes K."/>
            <person name="McNally C."/>
            <person name="Neshat S."/>
        </authorList>
    </citation>
    <scope>FUNCTION AS AN ANTIBIOTIC EFFLUX PUMP</scope>
    <source>
        <strain>PAO6609</strain>
    </source>
</reference>
<reference key="6">
    <citation type="journal article" date="1995" name="Antimicrob. Agents Chemother.">
        <title>Role of mexA-mexB-oprM in antibiotic efflux in Pseudomonas aeruginosa.</title>
        <authorList>
            <person name="Li X.-Z."/>
            <person name="Nikaido H."/>
            <person name="Poole K."/>
        </authorList>
    </citation>
    <scope>FUNCTION IN ANTIBIOTIC EFFLUX</scope>
    <scope>ACTIVITY REGULATION</scope>
    <source>
        <strain>ATCC 15692 / DSM 22644 / CIP 104116 / JCM 14847 / LMG 12228 / 1C / PRS 101 / PAO1</strain>
    </source>
</reference>
<reference key="7">
    <citation type="journal article" date="1998" name="J. Bacteriol.">
        <title>Role of the multidrug efflux systems of Pseudomonas aeruginosa in organic solvent tolerance.</title>
        <authorList>
            <person name="Li X.-Z."/>
            <person name="Zhang L."/>
            <person name="Poole K."/>
        </authorList>
    </citation>
    <scope>FUNCTION IN SOLVENT EFFLUX</scope>
    <source>
        <strain>ATCC 15692 / DSM 22644 / CIP 104116 / JCM 14847 / LMG 12228 / 1C / PRS 101 / PAO1</strain>
    </source>
</reference>
<reference key="8">
    <citation type="journal article" date="1999" name="J. Bacteriol.">
        <title>Active efflux and diffusion are involved in transport of Pseudomonas aeruginosa cell-to-cell signals.</title>
        <authorList>
            <person name="Pearson J.P."/>
            <person name="Van Delden C."/>
            <person name="Iglewski B.H."/>
        </authorList>
    </citation>
    <scope>FUNCTION</scope>
    <scope>DISRUPTION PHENOTYPE</scope>
</reference>
<reference key="9">
    <citation type="journal article" date="1999" name="J. Biol. Chem.">
        <title>Membrane topology of the xenobiotic-exporting subunit, MexB, of the MexA,B-OprM extrusion pump in Pseudomonas aeruginosa.</title>
        <authorList>
            <person name="Guan L."/>
            <person name="Ehrmann M."/>
            <person name="Yoneyama H."/>
            <person name="Nakae T."/>
        </authorList>
    </citation>
    <scope>TOPOLOGY</scope>
    <source>
        <strain>PAO4290</strain>
    </source>
</reference>
<reference key="10">
    <citation type="journal article" date="2015" name="Nat. Commun.">
        <title>In vitro transport activity of the fully assembled MexAB-OprM efflux pump from Pseudomonas aeruginosa.</title>
        <authorList>
            <person name="Verchere A."/>
            <person name="Dezi M."/>
            <person name="Adrien V."/>
            <person name="Broutin I."/>
            <person name="Picard M."/>
        </authorList>
    </citation>
    <scope>FUNCTION</scope>
    <scope>MUTAGENESIS OF ASP-407</scope>
</reference>
<reference key="11">
    <citation type="journal article" date="2020" name="Environ. Microbiol.">
        <title>The impaired quorum sensing response of Pseudomonas aeruginosa MexAB-OprM efflux pump overexpressing mutants is not due to non-physiological efflux of 3-oxo-C12-HSL.</title>
        <authorList>
            <person name="Alcalde-Rico M."/>
            <person name="Olivares-Pacheco J."/>
            <person name="Halliday N."/>
            <person name="Camara M."/>
            <person name="Martinez J.L."/>
        </authorList>
    </citation>
    <scope>FUNCTION</scope>
</reference>
<reference evidence="14 15" key="12">
    <citation type="journal article" date="2013" name="Nature">
        <title>Structural basis for the inhibition of bacterial multidrug exporters.</title>
        <authorList>
            <person name="Nakashima R."/>
            <person name="Sakurai K."/>
            <person name="Yamasaki S."/>
            <person name="Hayashi K."/>
            <person name="Nagata C."/>
            <person name="Hoshino K."/>
            <person name="Onodera Y."/>
            <person name="Nishino K."/>
            <person name="Yamaguchi A."/>
        </authorList>
    </citation>
    <scope>X-RAY CRYSTALLOGRAPHY (2.71 ANGSTROMS)</scope>
    <scope>ACTIVITY REGULATION</scope>
    <scope>IDENTIFICATION AS A DRUG TARGET</scope>
</reference>
<reference evidence="16 17" key="13">
    <citation type="journal article" date="2019" name="Nat. Commun.">
        <title>Structures of the wild-type MexAB-OprM tripartite pump reveal its complex formation and drug efflux mechanism.</title>
        <authorList>
            <person name="Tsutsumi K."/>
            <person name="Yonehara R."/>
            <person name="Ishizaka-Ikeda E."/>
            <person name="Miyazaki N."/>
            <person name="Maeda S."/>
            <person name="Iwasaki K."/>
            <person name="Nakagawa A."/>
            <person name="Yamashita E."/>
        </authorList>
    </citation>
    <scope>STRUCTURE BY ELECTRON MICROSCOPY (3.64 ANGSTROMS)</scope>
    <scope>FUNCTION</scope>
    <scope>SUBUNIT</scope>
    <source>
        <strain>ATCC 15692 / DSM 22644 / CIP 104116 / JCM 14847 / LMG 12228 / 1C / PRS 101 / PAO1</strain>
    </source>
</reference>
<reference evidence="18 19 20" key="14">
    <citation type="journal article" date="2020" name="Nat. Commun.">
        <title>Antibiotic export by MexB multidrug efflux transporter is allosterically controlled by a MexA-OprM chaperone-like complex.</title>
        <authorList>
            <person name="Glavier M."/>
            <person name="Puvanendran D."/>
            <person name="Salvador D."/>
            <person name="Decossas M."/>
            <person name="Phan G."/>
            <person name="Garnier C."/>
            <person name="Frezza E."/>
            <person name="Cece Q."/>
            <person name="Schoehn G."/>
            <person name="Picard M."/>
            <person name="Taveau J.C."/>
            <person name="Daury L."/>
            <person name="Broutin I."/>
            <person name="Lambert O."/>
        </authorList>
    </citation>
    <scope>STRUCTURE BY ELECTRON MICROSCOPY (3.20 ANGSTROMS)</scope>
    <scope>FUNCTION</scope>
    <scope>SUBUNIT</scope>
    <scope>MUTAGENESIS OF ASP-407</scope>
</reference>
<feature type="chain" id="PRO_0000161844" description="Multidrug resistance protein MexB">
    <location>
        <begin position="1"/>
        <end position="1046"/>
    </location>
</feature>
<feature type="topological domain" description="Cytoplasmic" evidence="1">
    <location>
        <begin position="1"/>
        <end position="9"/>
    </location>
</feature>
<feature type="transmembrane region" description="Helical">
    <location>
        <begin position="10"/>
        <end position="28"/>
    </location>
</feature>
<feature type="topological domain" description="Periplasmic" evidence="1">
    <location>
        <begin position="29"/>
        <end position="339"/>
    </location>
</feature>
<feature type="transmembrane region" description="Helical">
    <location>
        <begin position="340"/>
        <end position="359"/>
    </location>
</feature>
<feature type="topological domain" description="Cytoplasmic" evidence="1">
    <location>
        <begin position="360"/>
        <end position="365"/>
    </location>
</feature>
<feature type="transmembrane region" description="Helical">
    <location>
        <begin position="366"/>
        <end position="385"/>
    </location>
</feature>
<feature type="topological domain" description="Periplasmic" evidence="1">
    <location>
        <begin position="386"/>
        <end position="391"/>
    </location>
</feature>
<feature type="transmembrane region" description="Helical">
    <location>
        <begin position="392"/>
        <end position="413"/>
    </location>
</feature>
<feature type="topological domain" description="Cytoplasmic" evidence="1">
    <location>
        <begin position="414"/>
        <end position="441"/>
    </location>
</feature>
<feature type="transmembrane region" description="Helical">
    <location>
        <begin position="442"/>
        <end position="460"/>
    </location>
</feature>
<feature type="topological domain" description="Periplasmic" evidence="1">
    <location>
        <begin position="461"/>
        <end position="473"/>
    </location>
</feature>
<feature type="transmembrane region" description="Helical">
    <location>
        <begin position="474"/>
        <end position="496"/>
    </location>
</feature>
<feature type="topological domain" description="Cytoplasmic" evidence="1">
    <location>
        <begin position="497"/>
        <end position="538"/>
    </location>
</feature>
<feature type="transmembrane region" description="Helical">
    <location>
        <begin position="539"/>
        <end position="557"/>
    </location>
</feature>
<feature type="topological domain" description="Periplasmic" evidence="1">
    <location>
        <begin position="558"/>
        <end position="871"/>
    </location>
</feature>
<feature type="transmembrane region" description="Helical">
    <location>
        <begin position="872"/>
        <end position="891"/>
    </location>
</feature>
<feature type="topological domain" description="Cytoplasmic" evidence="1">
    <location>
        <begin position="892"/>
        <end position="897"/>
    </location>
</feature>
<feature type="transmembrane region" description="Helical">
    <location>
        <begin position="898"/>
        <end position="917"/>
    </location>
</feature>
<feature type="topological domain" description="Periplasmic" evidence="1">
    <location>
        <begin position="918"/>
        <end position="923"/>
    </location>
</feature>
<feature type="transmembrane region" description="Helical">
    <location>
        <begin position="924"/>
        <end position="945"/>
    </location>
</feature>
<feature type="topological domain" description="Cytoplasmic" evidence="1">
    <location>
        <begin position="946"/>
        <end position="972"/>
    </location>
</feature>
<feature type="transmembrane region" description="Helical">
    <location>
        <begin position="973"/>
        <end position="991"/>
    </location>
</feature>
<feature type="topological domain" description="Periplasmic" evidence="1">
    <location>
        <begin position="992"/>
        <end position="1004"/>
    </location>
</feature>
<feature type="transmembrane region" description="Helical">
    <location>
        <begin position="1005"/>
        <end position="1027"/>
    </location>
</feature>
<feature type="topological domain" description="Cytoplasmic" evidence="1">
    <location>
        <begin position="1028"/>
        <end position="1046"/>
    </location>
</feature>
<feature type="mutagenesis site" description="Proton counter-transport is compromised, thereby preventing efflux pump activity, in vitro." evidence="3 6">
    <original>D</original>
    <variation>N</variation>
    <location>
        <position position="407"/>
    </location>
</feature>
<feature type="sequence conflict" description="In Ref. 3; AAD45628." evidence="13" ref="3">
    <original>S</original>
    <variation>N</variation>
    <location>
        <position position="29"/>
    </location>
</feature>
<feature type="sequence conflict" description="In Ref. 1; AAA74437." evidence="13" ref="1">
    <original>I</original>
    <variation>T</variation>
    <location>
        <position position="90"/>
    </location>
</feature>
<feature type="helix" evidence="22">
    <location>
        <begin position="2"/>
        <end position="7"/>
    </location>
</feature>
<feature type="helix" evidence="22">
    <location>
        <begin position="9"/>
        <end position="27"/>
    </location>
</feature>
<feature type="strand" evidence="22">
    <location>
        <begin position="42"/>
        <end position="48"/>
    </location>
</feature>
<feature type="helix" evidence="22">
    <location>
        <begin position="54"/>
        <end position="60"/>
    </location>
</feature>
<feature type="helix" evidence="22">
    <location>
        <begin position="62"/>
        <end position="66"/>
    </location>
</feature>
<feature type="strand" evidence="22">
    <location>
        <begin position="75"/>
        <end position="83"/>
    </location>
</feature>
<feature type="strand" evidence="22">
    <location>
        <begin position="86"/>
        <end position="94"/>
    </location>
</feature>
<feature type="helix" evidence="22">
    <location>
        <begin position="100"/>
        <end position="114"/>
    </location>
</feature>
<feature type="helix" evidence="22">
    <location>
        <begin position="115"/>
        <end position="117"/>
    </location>
</feature>
<feature type="helix" evidence="22">
    <location>
        <begin position="120"/>
        <end position="123"/>
    </location>
</feature>
<feature type="strand" evidence="22">
    <location>
        <begin position="128"/>
        <end position="143"/>
    </location>
</feature>
<feature type="strand" evidence="22">
    <location>
        <begin position="145"/>
        <end position="147"/>
    </location>
</feature>
<feature type="helix" evidence="22">
    <location>
        <begin position="151"/>
        <end position="161"/>
    </location>
</feature>
<feature type="helix" evidence="22">
    <location>
        <begin position="163"/>
        <end position="167"/>
    </location>
</feature>
<feature type="strand" evidence="25">
    <location>
        <begin position="169"/>
        <end position="171"/>
    </location>
</feature>
<feature type="strand" evidence="22">
    <location>
        <begin position="172"/>
        <end position="179"/>
    </location>
</feature>
<feature type="strand" evidence="22">
    <location>
        <begin position="182"/>
        <end position="188"/>
    </location>
</feature>
<feature type="helix" evidence="22">
    <location>
        <begin position="190"/>
        <end position="195"/>
    </location>
</feature>
<feature type="helix" evidence="22">
    <location>
        <begin position="200"/>
        <end position="210"/>
    </location>
</feature>
<feature type="strand" evidence="25">
    <location>
        <begin position="218"/>
        <end position="220"/>
    </location>
</feature>
<feature type="strand" evidence="22">
    <location>
        <begin position="233"/>
        <end position="235"/>
    </location>
</feature>
<feature type="helix" evidence="22">
    <location>
        <begin position="243"/>
        <end position="247"/>
    </location>
</feature>
<feature type="strand" evidence="22">
    <location>
        <begin position="250"/>
        <end position="252"/>
    </location>
</feature>
<feature type="turn" evidence="21">
    <location>
        <begin position="255"/>
        <end position="257"/>
    </location>
</feature>
<feature type="strand" evidence="24">
    <location>
        <begin position="259"/>
        <end position="261"/>
    </location>
</feature>
<feature type="helix" evidence="22">
    <location>
        <begin position="262"/>
        <end position="265"/>
    </location>
</feature>
<feature type="strand" evidence="22">
    <location>
        <begin position="266"/>
        <end position="273"/>
    </location>
</feature>
<feature type="strand" evidence="22">
    <location>
        <begin position="278"/>
        <end position="281"/>
    </location>
</feature>
<feature type="strand" evidence="22">
    <location>
        <begin position="284"/>
        <end position="294"/>
    </location>
</feature>
<feature type="helix" evidence="22">
    <location>
        <begin position="299"/>
        <end position="311"/>
    </location>
</feature>
<feature type="helix" evidence="22">
    <location>
        <begin position="314"/>
        <end position="316"/>
    </location>
</feature>
<feature type="strand" evidence="22">
    <location>
        <begin position="322"/>
        <end position="324"/>
    </location>
</feature>
<feature type="strand" evidence="22">
    <location>
        <begin position="326"/>
        <end position="329"/>
    </location>
</feature>
<feature type="helix" evidence="22">
    <location>
        <begin position="330"/>
        <end position="359"/>
    </location>
</feature>
<feature type="helix" evidence="22">
    <location>
        <begin position="362"/>
        <end position="386"/>
    </location>
</feature>
<feature type="helix" evidence="22">
    <location>
        <begin position="392"/>
        <end position="405"/>
    </location>
</feature>
<feature type="helix" evidence="22">
    <location>
        <begin position="407"/>
        <end position="421"/>
    </location>
</feature>
<feature type="helix" evidence="22">
    <location>
        <begin position="427"/>
        <end position="436"/>
    </location>
</feature>
<feature type="helix" evidence="22">
    <location>
        <begin position="439"/>
        <end position="450"/>
    </location>
</feature>
<feature type="turn" evidence="22">
    <location>
        <begin position="451"/>
        <end position="453"/>
    </location>
</feature>
<feature type="helix" evidence="22">
    <location>
        <begin position="455"/>
        <end position="457"/>
    </location>
</feature>
<feature type="helix" evidence="22">
    <location>
        <begin position="461"/>
        <end position="496"/>
    </location>
</feature>
<feature type="strand" evidence="24">
    <location>
        <begin position="506"/>
        <end position="509"/>
    </location>
</feature>
<feature type="helix" evidence="22">
    <location>
        <begin position="513"/>
        <end position="537"/>
    </location>
</feature>
<feature type="helix" evidence="22">
    <location>
        <begin position="539"/>
        <end position="555"/>
    </location>
</feature>
<feature type="strand" evidence="22">
    <location>
        <begin position="571"/>
        <end position="577"/>
    </location>
</feature>
<feature type="helix" evidence="22">
    <location>
        <begin position="584"/>
        <end position="600"/>
    </location>
</feature>
<feature type="turn" evidence="22">
    <location>
        <begin position="601"/>
        <end position="605"/>
    </location>
</feature>
<feature type="strand" evidence="22">
    <location>
        <begin position="606"/>
        <end position="614"/>
    </location>
</feature>
<feature type="turn" evidence="22">
    <location>
        <begin position="621"/>
        <end position="623"/>
    </location>
</feature>
<feature type="strand" evidence="22">
    <location>
        <begin position="624"/>
        <end position="631"/>
    </location>
</feature>
<feature type="helix" evidence="22">
    <location>
        <begin position="634"/>
        <end position="636"/>
    </location>
</feature>
<feature type="turn" evidence="22">
    <location>
        <begin position="639"/>
        <end position="641"/>
    </location>
</feature>
<feature type="strand" evidence="22">
    <location>
        <begin position="642"/>
        <end position="644"/>
    </location>
</feature>
<feature type="helix" evidence="22">
    <location>
        <begin position="645"/>
        <end position="648"/>
    </location>
</feature>
<feature type="turn" evidence="22">
    <location>
        <begin position="649"/>
        <end position="651"/>
    </location>
</feature>
<feature type="helix" evidence="22">
    <location>
        <begin position="652"/>
        <end position="656"/>
    </location>
</feature>
<feature type="strand" evidence="21">
    <location>
        <begin position="659"/>
        <end position="666"/>
    </location>
</feature>
<feature type="helix" evidence="23">
    <location>
        <begin position="672"/>
        <end position="674"/>
    </location>
</feature>
<feature type="strand" evidence="23">
    <location>
        <begin position="676"/>
        <end position="679"/>
    </location>
</feature>
<feature type="strand" evidence="22">
    <location>
        <begin position="682"/>
        <end position="685"/>
    </location>
</feature>
<feature type="strand" evidence="21">
    <location>
        <begin position="688"/>
        <end position="690"/>
    </location>
</feature>
<feature type="helix" evidence="22">
    <location>
        <begin position="692"/>
        <end position="705"/>
    </location>
</feature>
<feature type="strand" evidence="22">
    <location>
        <begin position="716"/>
        <end position="719"/>
    </location>
</feature>
<feature type="strand" evidence="22">
    <location>
        <begin position="726"/>
        <end position="730"/>
    </location>
</feature>
<feature type="helix" evidence="22">
    <location>
        <begin position="732"/>
        <end position="738"/>
    </location>
</feature>
<feature type="helix" evidence="22">
    <location>
        <begin position="742"/>
        <end position="753"/>
    </location>
</feature>
<feature type="strand" evidence="22">
    <location>
        <begin position="756"/>
        <end position="763"/>
    </location>
</feature>
<feature type="strand" evidence="22">
    <location>
        <begin position="766"/>
        <end position="774"/>
    </location>
</feature>
<feature type="helix" evidence="22">
    <location>
        <begin position="776"/>
        <end position="778"/>
    </location>
</feature>
<feature type="strand" evidence="22">
    <location>
        <begin position="779"/>
        <end position="781"/>
    </location>
</feature>
<feature type="helix" evidence="22">
    <location>
        <begin position="782"/>
        <end position="786"/>
    </location>
</feature>
<feature type="strand" evidence="22">
    <location>
        <begin position="789"/>
        <end position="791"/>
    </location>
</feature>
<feature type="strand" evidence="21">
    <location>
        <begin position="793"/>
        <end position="795"/>
    </location>
</feature>
<feature type="strand" evidence="22">
    <location>
        <begin position="797"/>
        <end position="799"/>
    </location>
</feature>
<feature type="helix" evidence="22">
    <location>
        <begin position="800"/>
        <end position="802"/>
    </location>
</feature>
<feature type="strand" evidence="22">
    <location>
        <begin position="803"/>
        <end position="807"/>
    </location>
</feature>
<feature type="strand" evidence="21">
    <location>
        <begin position="813"/>
        <end position="815"/>
    </location>
</feature>
<feature type="strand" evidence="22">
    <location>
        <begin position="816"/>
        <end position="827"/>
    </location>
</feature>
<feature type="turn" evidence="22">
    <location>
        <begin position="836"/>
        <end position="838"/>
    </location>
</feature>
<feature type="helix" evidence="22">
    <location>
        <begin position="839"/>
        <end position="846"/>
    </location>
</feature>
<feature type="helix" evidence="22">
    <location>
        <begin position="847"/>
        <end position="849"/>
    </location>
</feature>
<feature type="strand" evidence="22">
    <location>
        <begin position="856"/>
        <end position="858"/>
    </location>
</feature>
<feature type="helix" evidence="22">
    <location>
        <begin position="860"/>
        <end position="867"/>
    </location>
</feature>
<feature type="strand" evidence="26">
    <location>
        <begin position="868"/>
        <end position="870"/>
    </location>
</feature>
<feature type="helix" evidence="22">
    <location>
        <begin position="875"/>
        <end position="890"/>
    </location>
</feature>
<feature type="strand" evidence="22">
    <location>
        <begin position="893"/>
        <end position="895"/>
    </location>
</feature>
<feature type="helix" evidence="22">
    <location>
        <begin position="898"/>
        <end position="901"/>
    </location>
</feature>
<feature type="turn" evidence="22">
    <location>
        <begin position="902"/>
        <end position="904"/>
    </location>
</feature>
<feature type="helix" evidence="22">
    <location>
        <begin position="905"/>
        <end position="916"/>
    </location>
</feature>
<feature type="turn" evidence="22">
    <location>
        <begin position="917"/>
        <end position="919"/>
    </location>
</feature>
<feature type="helix" evidence="22">
    <location>
        <begin position="924"/>
        <end position="939"/>
    </location>
</feature>
<feature type="helix" evidence="22">
    <location>
        <begin position="942"/>
        <end position="951"/>
    </location>
</feature>
<feature type="turn" evidence="25">
    <location>
        <begin position="953"/>
        <end position="955"/>
    </location>
</feature>
<feature type="helix" evidence="22">
    <location>
        <begin position="958"/>
        <end position="988"/>
    </location>
</feature>
<feature type="helix" evidence="22">
    <location>
        <begin position="995"/>
        <end position="1023"/>
    </location>
</feature>
<feature type="helix" evidence="22">
    <location>
        <begin position="1025"/>
        <end position="1028"/>
    </location>
</feature>
<organism>
    <name type="scientific">Pseudomonas aeruginosa (strain ATCC 15692 / DSM 22644 / CIP 104116 / JCM 14847 / LMG 12228 / 1C / PRS 101 / PAO1)</name>
    <dbReference type="NCBI Taxonomy" id="208964"/>
    <lineage>
        <taxon>Bacteria</taxon>
        <taxon>Pseudomonadati</taxon>
        <taxon>Pseudomonadota</taxon>
        <taxon>Gammaproteobacteria</taxon>
        <taxon>Pseudomonadales</taxon>
        <taxon>Pseudomonadaceae</taxon>
        <taxon>Pseudomonas</taxon>
    </lineage>
</organism>
<gene>
    <name type="primary">mexB</name>
    <name type="ordered locus">PA0426</name>
</gene>
<sequence>MSKFFIDRPIFAWVIALVIMLAGGLSILSLPVNQYPAIAPPAIAVQVSYPGASAETVQDTVVQVIEQQMNGIDNLRYISSESNSDGSMTITVTFEQGTDPDIAQVQVQNKLQLATPLLPQEVQRQGIRVTKAVKNFLMVVGVVSTDGSMTKEDLSNYIVSNIQDPLSRTKGVGDFQVFGSQYSMRIWLDPAKLNSYQLTPGDVSSAIQAQNVQISSGQLGGLPAVKGQQLNATIIGKTRLQTAEQFENILLKVNPDGSQVRLKDVADVGLGGQDYSINAQFNGSPASGIAIKLATGANALDTAKAIRQTIANLEPFMPQGMKVVYPYDTTPVVSASIHEVVKTLGEAILLVFLVMYLFLQNFRATLIPTIAVPVVLLGTFGVLAAFGFSINTLTMFGMVLAIGLLVDDAIVVVENVERVMAEEGLSPREAARKSMGQIQGALVGIAMVLSAVFLPMAFFGGSTGVIYRQFSITIVSAMALSVIVALILTPALCATMLKPIEKGDHGEHKGGFFGWFNRMFLSTTHGYERGVASILKHRAPYLLIYVVIVAGMIWMFTRIPTAFLPDEDQGVLFAQVQTPPGSSAERTQVVVDSMREYLLEKESSSVSSVFTVTGFNFAGRGQSSGMAFIMLKPWEERPGGENSVFELAKRAQMHFFSFKDAMVFAFAPPSVLELGNATGFDLFLQDQAGVGHEVLLQARNKFLMLAAQNPALQRVRPNGMSDEPQYKLEIDDEKASALGVSLADINSTVSIAWGSSYVNDFIDRGRVKRVYLQGRPDARMNPDDLSKWYVRNDKGEMVPFNAFATGKWEYGSPKLERYNGVPAMEILGEPAPGLSSGDAMAAVEEIVKQLPKGVGYSWTGLSYEERLSGSQAPALYALSLLVVFLCLAALYESWSIPFSVMLVVPLGVIGALLATSMRGLSNDVFFQVGLLTTIGLSAKNAILIVEFAKELHEQGKGIVEAAIEACRMRLRPIVMTSLAFILGVVPLAISTGAGSGSQHAIGTGVIGGMVTATVLAIFWVPLFYVAVSTLFKDEASKQQASVEKGQ</sequence>
<comment type="function">
    <text evidence="3 4 5 6 7 8 9 10 11 12">The inner membrane transporter component of the MexAB-OprM efflux system that confers multidrug resistance (PubMed:25901994, PubMed:30944318, PubMed:33009415, PubMed:8226684, PubMed:8540696). Functions as the major efflux pump for n-hexane and p-xylene efflux (PubMed:9603892). Has been shown in one study to be involved in the active efflux of the autoinducer N-(3-oxododecanoyl) homoserine lactone, thereby playing an indirect role in quorum-sensing; but has been shown in another study not to be involved in efflux of this autoinducer (PubMed:32715566, PubMed:9973347). Over-expression of the pump increases antibiotic and solvent efflux capacities (PubMed:8540696). Implicated in the secretion of the siderophore pyoverdine (PubMed:7968531, PubMed:8226684).</text>
</comment>
<comment type="activity regulation">
    <text evidence="2 3 8">Export of antibiotics and solvents is dramatically decreased in the presence of the protonophore carbonyl cyanide m-chlorophenylhydrazone (CCCP), therefore may be driven by a proton gradient (PubMed:25901994, PubMed:8540696). Antibiotic efflux is inhibited by pyridopyrimidine derivatives, such as ABI-PP, acting by binding to a hydrophobic pocket in MexB (PubMed:23812586).</text>
</comment>
<comment type="subunit">
    <text evidence="1 3 4 6">Component of the MexAB-OprM multidrug efflux complex, composed of six MexA subunits forming a hexameric tube, binding to a MexB trimer, which interact with the trimeric OprM outer membrane channel protein (PubMed:10187844, PubMed:30944318). OprM is thought to not directly contact MexB; instead, MexA joins MexB and OprM by forming a funnel-like hexamer anchored to the inner membrane (PubMed:30944318). MexA may initially form a hexameric ring complex with MexB prior to OprM, then OprM undergoes a conformational change as it contacts MexA, allowing the periplasmic gate to open (PubMed:30944318, PubMed:33009415). It is thought that, under high intracellular substrate concentration, MexB ejects substrate into the tunnel formed by MexA-OprM; as the substrate level declines, conformational changes in MexB cause efflux to reduce and stop and the complex shifts to the closed state (PubMed:30944318, PubMed:33009415). Acts as a substrate:proton antiporter and activity is enhanced significantly when in complex with MexA and OprM, in vitro (PubMed:25901994, PubMed:33009415).</text>
</comment>
<comment type="interaction">
    <interactant intactId="EBI-6400435">
        <id>P52002</id>
    </interactant>
    <interactant intactId="EBI-1119939">
        <id>P0A9Q1</id>
        <label>arcA</label>
    </interactant>
    <organismsDiffer>true</organismsDiffer>
    <experiments>2</experiments>
</comment>
<comment type="subcellular location">
    <subcellularLocation>
        <location>Cell inner membrane</location>
        <topology>Multi-pass membrane protein</topology>
    </subcellularLocation>
</comment>
<comment type="induction">
    <text>By growth under severe iron limitation.</text>
</comment>
<comment type="disruption phenotype">
    <text evidence="10">Disruption of MexA, MexB and OprM significantly reduces active efflux of N-(3-oxododecanoyl) homoserine lactone/3-oxo-C12-HSL/PAI-1, but not N-butyryl homoserine lactone/C4-HSL/PAI-2.</text>
</comment>
<comment type="miscellaneous">
    <text evidence="2">Pyridopyrimidine derivatives, such as ABI-PP, are not exported by the MexAB-OprM efflux pump, bind tightly to a MexB hydrophobic pocket and so potentiate the activities of antibiotics such as erythromycin.</text>
</comment>
<comment type="similarity">
    <text evidence="13">Belongs to the resistance-nodulation-cell division (RND) (TC 2.A.6) family.</text>
</comment>
<comment type="caution">
    <text evidence="5 10">Has been shown in one study to be involved in the active efflux of the autoinducer N-(3-oxododecanoyl) homoserine lactone (PubMed:9973347). However, has been shown in another study not to be involved in efflux of this autoinducer (PubMed:32715566).</text>
</comment>
<evidence type="ECO:0000269" key="1">
    <source>
    </source>
</evidence>
<evidence type="ECO:0000269" key="2">
    <source>
    </source>
</evidence>
<evidence type="ECO:0000269" key="3">
    <source>
    </source>
</evidence>
<evidence type="ECO:0000269" key="4">
    <source>
    </source>
</evidence>
<evidence type="ECO:0000269" key="5">
    <source>
    </source>
</evidence>
<evidence type="ECO:0000269" key="6">
    <source>
    </source>
</evidence>
<evidence type="ECO:0000269" key="7">
    <source>
    </source>
</evidence>
<evidence type="ECO:0000269" key="8">
    <source>
    </source>
</evidence>
<evidence type="ECO:0000269" key="9">
    <source>
    </source>
</evidence>
<evidence type="ECO:0000269" key="10">
    <source>
    </source>
</evidence>
<evidence type="ECO:0000303" key="11">
    <source>
    </source>
</evidence>
<evidence type="ECO:0000303" key="12">
    <source>
    </source>
</evidence>
<evidence type="ECO:0000305" key="13"/>
<evidence type="ECO:0007744" key="14">
    <source>
        <dbReference type="PDB" id="3W9I"/>
    </source>
</evidence>
<evidence type="ECO:0007744" key="15">
    <source>
        <dbReference type="PDB" id="3W9J"/>
    </source>
</evidence>
<evidence type="ECO:0007744" key="16">
    <source>
        <dbReference type="PDB" id="6IOK"/>
    </source>
</evidence>
<evidence type="ECO:0007744" key="17">
    <source>
        <dbReference type="PDB" id="6IOL"/>
    </source>
</evidence>
<evidence type="ECO:0007744" key="18">
    <source>
        <dbReference type="PDB" id="6T7S"/>
    </source>
</evidence>
<evidence type="ECO:0007744" key="19">
    <source>
        <dbReference type="PDB" id="6TA5"/>
    </source>
</evidence>
<evidence type="ECO:0007744" key="20">
    <source>
        <dbReference type="PDB" id="6TA6"/>
    </source>
</evidence>
<evidence type="ECO:0007829" key="21">
    <source>
        <dbReference type="PDB" id="2V50"/>
    </source>
</evidence>
<evidence type="ECO:0007829" key="22">
    <source>
        <dbReference type="PDB" id="3W9I"/>
    </source>
</evidence>
<evidence type="ECO:0007829" key="23">
    <source>
        <dbReference type="PDB" id="3W9J"/>
    </source>
</evidence>
<evidence type="ECO:0007829" key="24">
    <source>
        <dbReference type="PDB" id="6IIA"/>
    </source>
</evidence>
<evidence type="ECO:0007829" key="25">
    <source>
        <dbReference type="PDB" id="6TA5"/>
    </source>
</evidence>
<evidence type="ECO:0007829" key="26">
    <source>
        <dbReference type="PDB" id="6TA6"/>
    </source>
</evidence>
<accession>P52002</accession>
<accession>Q9S505</accession>
<keyword id="KW-0002">3D-structure</keyword>
<keyword id="KW-0046">Antibiotic resistance</keyword>
<keyword id="KW-0997">Cell inner membrane</keyword>
<keyword id="KW-1003">Cell membrane</keyword>
<keyword id="KW-0903">Direct protein sequencing</keyword>
<keyword id="KW-0472">Membrane</keyword>
<keyword id="KW-1185">Reference proteome</keyword>
<keyword id="KW-0812">Transmembrane</keyword>
<keyword id="KW-1133">Transmembrane helix</keyword>
<keyword id="KW-0813">Transport</keyword>
<dbReference type="EMBL" id="L11616">
    <property type="protein sequence ID" value="AAA74437.1"/>
    <property type="molecule type" value="Genomic_DNA"/>
</dbReference>
<dbReference type="EMBL" id="AE004091">
    <property type="protein sequence ID" value="AAG03815.1"/>
    <property type="molecule type" value="Genomic_DNA"/>
</dbReference>
<dbReference type="EMBL" id="AF092566">
    <property type="protein sequence ID" value="AAD45628.1"/>
    <property type="molecule type" value="Genomic_DNA"/>
</dbReference>
<dbReference type="PIR" id="E83593">
    <property type="entry name" value="E83593"/>
</dbReference>
<dbReference type="PIR" id="S39630">
    <property type="entry name" value="S39630"/>
</dbReference>
<dbReference type="RefSeq" id="NP_249117.1">
    <property type="nucleotide sequence ID" value="NC_002516.2"/>
</dbReference>
<dbReference type="RefSeq" id="WP_003107312.1">
    <property type="nucleotide sequence ID" value="NZ_QZGE01000016.1"/>
</dbReference>
<dbReference type="PDB" id="2V50">
    <property type="method" value="X-ray"/>
    <property type="resolution" value="3.00 A"/>
    <property type="chains" value="A/B/C/D/E/F=1-1046"/>
</dbReference>
<dbReference type="PDB" id="3W9I">
    <property type="method" value="X-ray"/>
    <property type="resolution" value="2.71 A"/>
    <property type="chains" value="A/B/C/D/E/F=1-1046"/>
</dbReference>
<dbReference type="PDB" id="3W9J">
    <property type="method" value="X-ray"/>
    <property type="resolution" value="3.15 A"/>
    <property type="chains" value="A/B/C/D/E/F=1-1046"/>
</dbReference>
<dbReference type="PDB" id="6IIA">
    <property type="method" value="X-ray"/>
    <property type="resolution" value="2.91 A"/>
    <property type="chains" value="A/B/C/D/E/F=1-1046"/>
</dbReference>
<dbReference type="PDB" id="6IOK">
    <property type="method" value="EM"/>
    <property type="resolution" value="3.64 A"/>
    <property type="chains" value="E/F/G=1-1046"/>
</dbReference>
<dbReference type="PDB" id="6IOL">
    <property type="method" value="EM"/>
    <property type="resolution" value="3.76 A"/>
    <property type="chains" value="E/F/G=1-1046"/>
</dbReference>
<dbReference type="PDB" id="6T7S">
    <property type="method" value="EM"/>
    <property type="resolution" value="4.50 A"/>
    <property type="chains" value="J/K/L=1-1046"/>
</dbReference>
<dbReference type="PDB" id="6TA5">
    <property type="method" value="EM"/>
    <property type="resolution" value="3.20 A"/>
    <property type="chains" value="J/K/L=1-1046"/>
</dbReference>
<dbReference type="PDB" id="6TA6">
    <property type="method" value="EM"/>
    <property type="resolution" value="3.20 A"/>
    <property type="chains" value="J/K/L=1-1046"/>
</dbReference>
<dbReference type="PDBsum" id="2V50"/>
<dbReference type="PDBsum" id="3W9I"/>
<dbReference type="PDBsum" id="3W9J"/>
<dbReference type="PDBsum" id="6IIA"/>
<dbReference type="PDBsum" id="6IOK"/>
<dbReference type="PDBsum" id="6IOL"/>
<dbReference type="PDBsum" id="6T7S"/>
<dbReference type="PDBsum" id="6TA5"/>
<dbReference type="PDBsum" id="6TA6"/>
<dbReference type="EMDB" id="EMD-10371"/>
<dbReference type="EMDB" id="EMD-9695"/>
<dbReference type="EMDB" id="EMD-9696"/>
<dbReference type="SMR" id="P52002"/>
<dbReference type="DIP" id="DIP-60510N"/>
<dbReference type="FunCoup" id="P52002">
    <property type="interactions" value="604"/>
</dbReference>
<dbReference type="IntAct" id="P52002">
    <property type="interactions" value="2"/>
</dbReference>
<dbReference type="STRING" id="208964.PA0426"/>
<dbReference type="ChEMBL" id="CHEMBL4523990"/>
<dbReference type="DrugBank" id="DB14879">
    <property type="generic name" value="Cefiderocol"/>
</dbReference>
<dbReference type="TCDB" id="2.A.6.2.6">
    <property type="family name" value="the resistance-nodulation-cell division (rnd) superfamily"/>
</dbReference>
<dbReference type="PaxDb" id="208964-PA0426"/>
<dbReference type="GeneID" id="877852"/>
<dbReference type="KEGG" id="pae:PA0426"/>
<dbReference type="PATRIC" id="fig|208964.12.peg.448"/>
<dbReference type="PseudoCAP" id="PA0426"/>
<dbReference type="HOGENOM" id="CLU_002755_1_1_6"/>
<dbReference type="InParanoid" id="P52002"/>
<dbReference type="OrthoDB" id="9757904at2"/>
<dbReference type="PhylomeDB" id="P52002"/>
<dbReference type="BioCyc" id="PAER208964:G1FZ6-430-MONOMER"/>
<dbReference type="EvolutionaryTrace" id="P52002"/>
<dbReference type="PHI-base" id="PHI:11923"/>
<dbReference type="Proteomes" id="UP000002438">
    <property type="component" value="Chromosome"/>
</dbReference>
<dbReference type="GO" id="GO:1990281">
    <property type="term" value="C:efflux pump complex"/>
    <property type="evidence" value="ECO:0000314"/>
    <property type="project" value="UniProtKB"/>
</dbReference>
<dbReference type="GO" id="GO:0005886">
    <property type="term" value="C:plasma membrane"/>
    <property type="evidence" value="ECO:0000314"/>
    <property type="project" value="UniProtKB"/>
</dbReference>
<dbReference type="GO" id="GO:0015562">
    <property type="term" value="F:efflux transmembrane transporter activity"/>
    <property type="evidence" value="ECO:0000314"/>
    <property type="project" value="UniProtKB"/>
</dbReference>
<dbReference type="GO" id="GO:0042910">
    <property type="term" value="F:xenobiotic transmembrane transporter activity"/>
    <property type="evidence" value="ECO:0000318"/>
    <property type="project" value="GO_Central"/>
</dbReference>
<dbReference type="GO" id="GO:0046677">
    <property type="term" value="P:response to antibiotic"/>
    <property type="evidence" value="ECO:0007669"/>
    <property type="project" value="UniProtKB-KW"/>
</dbReference>
<dbReference type="GO" id="GO:0055085">
    <property type="term" value="P:transmembrane transport"/>
    <property type="evidence" value="ECO:0000314"/>
    <property type="project" value="UniProtKB"/>
</dbReference>
<dbReference type="GO" id="GO:0140330">
    <property type="term" value="P:xenobiotic detoxification by transmembrane export across the cell outer membrane"/>
    <property type="evidence" value="ECO:0000314"/>
    <property type="project" value="UniProtKB"/>
</dbReference>
<dbReference type="FunFam" id="1.20.1640.10:FF:000001">
    <property type="entry name" value="Efflux pump membrane transporter"/>
    <property type="match status" value="1"/>
</dbReference>
<dbReference type="FunFam" id="1.20.1640.10:FF:000002">
    <property type="entry name" value="Efflux pump membrane transporter"/>
    <property type="match status" value="1"/>
</dbReference>
<dbReference type="FunFam" id="3.30.2090.10:FF:000001">
    <property type="entry name" value="Efflux pump membrane transporter"/>
    <property type="match status" value="1"/>
</dbReference>
<dbReference type="FunFam" id="3.30.2090.10:FF:000002">
    <property type="entry name" value="Efflux pump membrane transporter"/>
    <property type="match status" value="1"/>
</dbReference>
<dbReference type="FunFam" id="3.30.70.1430:FF:000001">
    <property type="entry name" value="Efflux pump membrane transporter"/>
    <property type="match status" value="1"/>
</dbReference>
<dbReference type="FunFam" id="3.30.70.1430:FF:000002">
    <property type="entry name" value="Efflux pump membrane transporter"/>
    <property type="match status" value="1"/>
</dbReference>
<dbReference type="Gene3D" id="3.30.70.1430">
    <property type="entry name" value="Multidrug efflux transporter AcrB pore domain"/>
    <property type="match status" value="2"/>
</dbReference>
<dbReference type="Gene3D" id="3.30.70.1440">
    <property type="entry name" value="Multidrug efflux transporter AcrB pore domain"/>
    <property type="match status" value="1"/>
</dbReference>
<dbReference type="Gene3D" id="3.30.70.1320">
    <property type="entry name" value="Multidrug efflux transporter AcrB pore domain like"/>
    <property type="match status" value="1"/>
</dbReference>
<dbReference type="Gene3D" id="3.30.2090.10">
    <property type="entry name" value="Multidrug efflux transporter AcrB TolC docking domain, DN and DC subdomains"/>
    <property type="match status" value="2"/>
</dbReference>
<dbReference type="Gene3D" id="1.20.1640.10">
    <property type="entry name" value="Multidrug efflux transporter AcrB transmembrane domain"/>
    <property type="match status" value="2"/>
</dbReference>
<dbReference type="InterPro" id="IPR027463">
    <property type="entry name" value="AcrB_DN_DC_subdom"/>
</dbReference>
<dbReference type="InterPro" id="IPR001036">
    <property type="entry name" value="Acrflvin-R"/>
</dbReference>
<dbReference type="InterPro" id="IPR004764">
    <property type="entry name" value="MdtF-like"/>
</dbReference>
<dbReference type="NCBIfam" id="TIGR00915">
    <property type="entry name" value="2A0602"/>
    <property type="match status" value="1"/>
</dbReference>
<dbReference type="NCBIfam" id="NF000282">
    <property type="entry name" value="RND_permease_1"/>
    <property type="match status" value="1"/>
</dbReference>
<dbReference type="PANTHER" id="PTHR32063">
    <property type="match status" value="1"/>
</dbReference>
<dbReference type="PANTHER" id="PTHR32063:SF13">
    <property type="entry name" value="MULTIDRUG EFFLUX PUMP SUBUNIT ACRB-RELATED"/>
    <property type="match status" value="1"/>
</dbReference>
<dbReference type="Pfam" id="PF00873">
    <property type="entry name" value="ACR_tran"/>
    <property type="match status" value="1"/>
</dbReference>
<dbReference type="PRINTS" id="PR00702">
    <property type="entry name" value="ACRIFLAVINRP"/>
</dbReference>
<dbReference type="SUPFAM" id="SSF82693">
    <property type="entry name" value="Multidrug efflux transporter AcrB pore domain, PN1, PN2, PC1 and PC2 subdomains"/>
    <property type="match status" value="3"/>
</dbReference>
<dbReference type="SUPFAM" id="SSF82714">
    <property type="entry name" value="Multidrug efflux transporter AcrB TolC docking domain, DN and DC subdomains"/>
    <property type="match status" value="2"/>
</dbReference>
<dbReference type="SUPFAM" id="SSF82866">
    <property type="entry name" value="Multidrug efflux transporter AcrB transmembrane domain"/>
    <property type="match status" value="2"/>
</dbReference>
<proteinExistence type="evidence at protein level"/>
<protein>
    <recommendedName>
        <fullName>Multidrug resistance protein MexB</fullName>
    </recommendedName>
    <alternativeName>
        <fullName>Multidrug-efflux transporter MexB</fullName>
    </alternativeName>
</protein>